<protein>
    <recommendedName>
        <fullName>Gamma-crystallin B</fullName>
    </recommendedName>
    <alternativeName>
        <fullName>Gamma-B-crystallin</fullName>
    </alternativeName>
    <alternativeName>
        <fullName>Gamma-crystallin 1-2</fullName>
    </alternativeName>
</protein>
<dbReference type="EMBL" id="M19359">
    <property type="protein sequence ID" value="AAA40982.1"/>
    <property type="molecule type" value="Genomic_DNA"/>
</dbReference>
<dbReference type="PIR" id="B24060">
    <property type="entry name" value="B24060"/>
</dbReference>
<dbReference type="RefSeq" id="NP_001103345.1">
    <property type="nucleotide sequence ID" value="NM_001109875.1"/>
</dbReference>
<dbReference type="SMR" id="P10066"/>
<dbReference type="STRING" id="10116.ENSRNOP00000043562"/>
<dbReference type="PhosphoSitePlus" id="P10066"/>
<dbReference type="PaxDb" id="10116-ENSRNOP00000043562"/>
<dbReference type="GeneID" id="301468"/>
<dbReference type="KEGG" id="rno:301468"/>
<dbReference type="UCSC" id="RGD:1584991">
    <property type="organism name" value="rat"/>
</dbReference>
<dbReference type="AGR" id="RGD:1584991"/>
<dbReference type="CTD" id="1419"/>
<dbReference type="RGD" id="1584991">
    <property type="gene designation" value="Crygb"/>
</dbReference>
<dbReference type="eggNOG" id="ENOG502RXJY">
    <property type="taxonomic scope" value="Eukaryota"/>
</dbReference>
<dbReference type="InParanoid" id="P10066"/>
<dbReference type="OrthoDB" id="8407241at2759"/>
<dbReference type="PhylomeDB" id="P10066"/>
<dbReference type="PRO" id="PR:P10066"/>
<dbReference type="Proteomes" id="UP000002494">
    <property type="component" value="Unplaced"/>
</dbReference>
<dbReference type="GO" id="GO:0005737">
    <property type="term" value="C:cytoplasm"/>
    <property type="evidence" value="ECO:0000266"/>
    <property type="project" value="RGD"/>
</dbReference>
<dbReference type="GO" id="GO:0005634">
    <property type="term" value="C:nucleus"/>
    <property type="evidence" value="ECO:0000266"/>
    <property type="project" value="RGD"/>
</dbReference>
<dbReference type="GO" id="GO:0005212">
    <property type="term" value="F:structural constituent of eye lens"/>
    <property type="evidence" value="ECO:0000266"/>
    <property type="project" value="RGD"/>
</dbReference>
<dbReference type="GO" id="GO:0001654">
    <property type="term" value="P:eye development"/>
    <property type="evidence" value="ECO:0000266"/>
    <property type="project" value="RGD"/>
</dbReference>
<dbReference type="GO" id="GO:0002088">
    <property type="term" value="P:lens development in camera-type eye"/>
    <property type="evidence" value="ECO:0000270"/>
    <property type="project" value="RGD"/>
</dbReference>
<dbReference type="GO" id="GO:0070307">
    <property type="term" value="P:lens fiber cell development"/>
    <property type="evidence" value="ECO:0000266"/>
    <property type="project" value="RGD"/>
</dbReference>
<dbReference type="GO" id="GO:0070309">
    <property type="term" value="P:lens fiber cell morphogenesis"/>
    <property type="evidence" value="ECO:0000266"/>
    <property type="project" value="RGD"/>
</dbReference>
<dbReference type="GO" id="GO:0007601">
    <property type="term" value="P:visual perception"/>
    <property type="evidence" value="ECO:0000318"/>
    <property type="project" value="GO_Central"/>
</dbReference>
<dbReference type="FunFam" id="2.60.20.10:FF:000001">
    <property type="entry name" value="Crystallin gamma S"/>
    <property type="match status" value="1"/>
</dbReference>
<dbReference type="FunFam" id="2.60.20.10:FF:000003">
    <property type="entry name" value="Crystallin gamma S"/>
    <property type="match status" value="1"/>
</dbReference>
<dbReference type="Gene3D" id="2.60.20.10">
    <property type="entry name" value="Crystallins"/>
    <property type="match status" value="2"/>
</dbReference>
<dbReference type="InterPro" id="IPR050252">
    <property type="entry name" value="Beta/Gamma-Crystallin"/>
</dbReference>
<dbReference type="InterPro" id="IPR001064">
    <property type="entry name" value="Beta/gamma_crystallin"/>
</dbReference>
<dbReference type="InterPro" id="IPR011024">
    <property type="entry name" value="G_crystallin-like"/>
</dbReference>
<dbReference type="PANTHER" id="PTHR11818">
    <property type="entry name" value="BETA/GAMMA CRYSTALLIN"/>
    <property type="match status" value="1"/>
</dbReference>
<dbReference type="PANTHER" id="PTHR11818:SF101">
    <property type="entry name" value="GAMMA-CRYSTALLIN B"/>
    <property type="match status" value="1"/>
</dbReference>
<dbReference type="Pfam" id="PF00030">
    <property type="entry name" value="Crystall"/>
    <property type="match status" value="2"/>
</dbReference>
<dbReference type="PRINTS" id="PR01367">
    <property type="entry name" value="BGCRYSTALLIN"/>
</dbReference>
<dbReference type="SMART" id="SM00247">
    <property type="entry name" value="XTALbg"/>
    <property type="match status" value="2"/>
</dbReference>
<dbReference type="SUPFAM" id="SSF49695">
    <property type="entry name" value="gamma-Crystallin-like"/>
    <property type="match status" value="1"/>
</dbReference>
<dbReference type="PROSITE" id="PS50915">
    <property type="entry name" value="CRYSTALLIN_BETA_GAMMA"/>
    <property type="match status" value="4"/>
</dbReference>
<feature type="chain" id="PRO_0000057590" description="Gamma-crystallin B">
    <location>
        <begin position="1"/>
        <end position="175"/>
    </location>
</feature>
<feature type="domain" description="Beta/gamma crystallin 'Greek key' 1" evidence="1">
    <location>
        <begin position="2"/>
        <end position="40"/>
    </location>
</feature>
<feature type="domain" description="Beta/gamma crystallin 'Greek key' 2" evidence="1">
    <location>
        <begin position="41"/>
        <end position="83"/>
    </location>
</feature>
<feature type="domain" description="Beta/gamma crystallin 'Greek key' 3" evidence="1">
    <location>
        <begin position="89"/>
        <end position="129"/>
    </location>
</feature>
<feature type="domain" description="Beta/gamma crystallin 'Greek key' 4" evidence="1">
    <location>
        <begin position="130"/>
        <end position="172"/>
    </location>
</feature>
<feature type="region of interest" description="Connecting peptide">
    <location>
        <begin position="84"/>
        <end position="88"/>
    </location>
</feature>
<feature type="sequence conflict" description="In Ref. 1; no nucleotide entry." evidence="2" ref="1">
    <original>C</original>
    <variation>S</variation>
    <location>
        <position position="16"/>
    </location>
</feature>
<organism>
    <name type="scientific">Rattus norvegicus</name>
    <name type="common">Rat</name>
    <dbReference type="NCBI Taxonomy" id="10116"/>
    <lineage>
        <taxon>Eukaryota</taxon>
        <taxon>Metazoa</taxon>
        <taxon>Chordata</taxon>
        <taxon>Craniata</taxon>
        <taxon>Vertebrata</taxon>
        <taxon>Euteleostomi</taxon>
        <taxon>Mammalia</taxon>
        <taxon>Eutheria</taxon>
        <taxon>Euarchontoglires</taxon>
        <taxon>Glires</taxon>
        <taxon>Rodentia</taxon>
        <taxon>Myomorpha</taxon>
        <taxon>Muroidea</taxon>
        <taxon>Muridae</taxon>
        <taxon>Murinae</taxon>
        <taxon>Rattus</taxon>
    </lineage>
</organism>
<sequence length="175" mass="21089">MGKITFFEDRGFQGRCYECSSDCPNLQTYFSRCNSVRVDSGCWMLYERPNYQGHQYFLRRGDYPDYQQWMGFSDSIRSCRLIPQHSGTYRMRIYERDDFRGQMSEITDDCLSLQDRFHLSEIHSLNVMEGCWVLYEMPSYRGRQYLLRPGEYRRYLDWGAANAKVGSFRRVMDFY</sequence>
<name>CRGB_RAT</name>
<evidence type="ECO:0000255" key="1">
    <source>
        <dbReference type="PROSITE-ProRule" id="PRU00028"/>
    </source>
</evidence>
<evidence type="ECO:0000305" key="2"/>
<gene>
    <name type="primary">Crygb</name>
</gene>
<keyword id="KW-0273">Eye lens protein</keyword>
<keyword id="KW-1185">Reference proteome</keyword>
<keyword id="KW-0677">Repeat</keyword>
<reference key="1">
    <citation type="journal article" date="1986" name="J. Mol. Biol.">
        <title>Concerted and divergent evolution within the rat gamma-crystallin gene family.</title>
        <authorList>
            <person name="den Dunnen J.T."/>
            <person name="Moormann R.J.M."/>
            <person name="Lubsen N.H."/>
            <person name="Schoenmakers J.G.G."/>
        </authorList>
    </citation>
    <scope>NUCLEOTIDE SEQUENCE [GENOMIC DNA]</scope>
</reference>
<reference key="2">
    <citation type="journal article" date="1989" name="Gene">
        <title>Nucleotide sequence of the rat gamma-crystallin gene region and comparison with an orthologous human region.</title>
        <authorList>
            <person name="den Dunnen J.T."/>
            <person name="van Neck J.W."/>
            <person name="Cremers F.P.M."/>
            <person name="Lubsen N.H."/>
            <person name="Schoenmakers J.G.G."/>
        </authorList>
    </citation>
    <scope>NUCLEOTIDE SEQUENCE [GENOMIC DNA]</scope>
</reference>
<comment type="function">
    <text>Crystallins are the dominant structural components of the vertebrate eye lens.</text>
</comment>
<comment type="domain">
    <text>Has a two-domain beta-structure, folded into four very similar Greek key motifs.</text>
</comment>
<comment type="miscellaneous">
    <text>There are six different gamma crystallins identified in rat lens.</text>
</comment>
<comment type="similarity">
    <text evidence="2">Belongs to the beta/gamma-crystallin family.</text>
</comment>
<proteinExistence type="inferred from homology"/>
<accession>P10066</accession>